<reference key="1">
    <citation type="submission" date="2006-05" db="EMBL/GenBank/DDBJ databases">
        <title>Complete sequence of chromosome 1 of Burkholderia cenocepacia AU 1054.</title>
        <authorList>
            <consortium name="US DOE Joint Genome Institute"/>
            <person name="Copeland A."/>
            <person name="Lucas S."/>
            <person name="Lapidus A."/>
            <person name="Barry K."/>
            <person name="Detter J.C."/>
            <person name="Glavina del Rio T."/>
            <person name="Hammon N."/>
            <person name="Israni S."/>
            <person name="Dalin E."/>
            <person name="Tice H."/>
            <person name="Pitluck S."/>
            <person name="Chain P."/>
            <person name="Malfatti S."/>
            <person name="Shin M."/>
            <person name="Vergez L."/>
            <person name="Schmutz J."/>
            <person name="Larimer F."/>
            <person name="Land M."/>
            <person name="Hauser L."/>
            <person name="Kyrpides N."/>
            <person name="Lykidis A."/>
            <person name="LiPuma J.J."/>
            <person name="Konstantinidis K."/>
            <person name="Tiedje J.M."/>
            <person name="Richardson P."/>
        </authorList>
    </citation>
    <scope>NUCLEOTIDE SEQUENCE [LARGE SCALE GENOMIC DNA]</scope>
    <source>
        <strain>AU 1054</strain>
    </source>
</reference>
<sequence>MSTAALVEGKIVQCIGAVIDVEFPRDSMPKIYDALILDGSELTLEVQQQLGDGVVRTICLGASDGLRRGLTVKNTAKPISVPVGKPTLGRIMDVLGRPIDEAGPIESDVTRSIHQKAPAFDELSPSTELLETGIKVIDLICPFAKGGKVGLFGGAGVGKTVNMMELINNIAKEHGGYSVFAGVGERTREGNDFYHEMKDSNVLDKVALVYGQMNEPPGNRLRVALTGLTMAEHFRDEGLDVLFFVDNIYRFTLAGTEVSALLGRMPSAVGYQPTLAEEMGKLQERITSTKKGSITSVQAVYVPADDLTDPSPATTFGHLDATVVLSRDIASLGIYPAVDPLDSTSRQIDPNVIGEEHYSITRRVQQTLQRYKELRDIIAILGMDELSPEDKLSVARARKIQRFLSQPFHVAEVFTGSPGKYVPLKETIRGFKMIVDGECDHLPEQAFYMVGTIDEAFEKAKKIQ</sequence>
<feature type="chain" id="PRO_0000254230" description="ATP synthase subunit beta">
    <location>
        <begin position="1"/>
        <end position="464"/>
    </location>
</feature>
<feature type="binding site" evidence="1">
    <location>
        <begin position="153"/>
        <end position="160"/>
    </location>
    <ligand>
        <name>ATP</name>
        <dbReference type="ChEBI" id="CHEBI:30616"/>
    </ligand>
</feature>
<keyword id="KW-0066">ATP synthesis</keyword>
<keyword id="KW-0067">ATP-binding</keyword>
<keyword id="KW-0997">Cell inner membrane</keyword>
<keyword id="KW-1003">Cell membrane</keyword>
<keyword id="KW-0139">CF(1)</keyword>
<keyword id="KW-0375">Hydrogen ion transport</keyword>
<keyword id="KW-0406">Ion transport</keyword>
<keyword id="KW-0472">Membrane</keyword>
<keyword id="KW-0547">Nucleotide-binding</keyword>
<keyword id="KW-1278">Translocase</keyword>
<keyword id="KW-0813">Transport</keyword>
<protein>
    <recommendedName>
        <fullName evidence="1">ATP synthase subunit beta</fullName>
        <ecNumber evidence="1">7.1.2.2</ecNumber>
    </recommendedName>
    <alternativeName>
        <fullName evidence="1">ATP synthase F1 sector subunit beta</fullName>
    </alternativeName>
    <alternativeName>
        <fullName evidence="1">F-ATPase subunit beta</fullName>
    </alternativeName>
</protein>
<gene>
    <name evidence="1" type="primary">atpD</name>
    <name type="ordered locus">Bcen_2949</name>
</gene>
<proteinExistence type="inferred from homology"/>
<comment type="function">
    <text evidence="1">Produces ATP from ADP in the presence of a proton gradient across the membrane. The catalytic sites are hosted primarily by the beta subunits.</text>
</comment>
<comment type="catalytic activity">
    <reaction evidence="1">
        <text>ATP + H2O + 4 H(+)(in) = ADP + phosphate + 5 H(+)(out)</text>
        <dbReference type="Rhea" id="RHEA:57720"/>
        <dbReference type="ChEBI" id="CHEBI:15377"/>
        <dbReference type="ChEBI" id="CHEBI:15378"/>
        <dbReference type="ChEBI" id="CHEBI:30616"/>
        <dbReference type="ChEBI" id="CHEBI:43474"/>
        <dbReference type="ChEBI" id="CHEBI:456216"/>
        <dbReference type="EC" id="7.1.2.2"/>
    </reaction>
</comment>
<comment type="subunit">
    <text evidence="1">F-type ATPases have 2 components, CF(1) - the catalytic core - and CF(0) - the membrane proton channel. CF(1) has five subunits: alpha(3), beta(3), gamma(1), delta(1), epsilon(1). CF(0) has three main subunits: a(1), b(2) and c(9-12). The alpha and beta chains form an alternating ring which encloses part of the gamma chain. CF(1) is attached to CF(0) by a central stalk formed by the gamma and epsilon chains, while a peripheral stalk is formed by the delta and b chains.</text>
</comment>
<comment type="subcellular location">
    <subcellularLocation>
        <location evidence="1">Cell inner membrane</location>
        <topology evidence="1">Peripheral membrane protein</topology>
    </subcellularLocation>
</comment>
<comment type="similarity">
    <text evidence="1">Belongs to the ATPase alpha/beta chains family.</text>
</comment>
<organism>
    <name type="scientific">Burkholderia orbicola (strain AU 1054)</name>
    <dbReference type="NCBI Taxonomy" id="331271"/>
    <lineage>
        <taxon>Bacteria</taxon>
        <taxon>Pseudomonadati</taxon>
        <taxon>Pseudomonadota</taxon>
        <taxon>Betaproteobacteria</taxon>
        <taxon>Burkholderiales</taxon>
        <taxon>Burkholderiaceae</taxon>
        <taxon>Burkholderia</taxon>
        <taxon>Burkholderia cepacia complex</taxon>
        <taxon>Burkholderia orbicola</taxon>
    </lineage>
</organism>
<dbReference type="EC" id="7.1.2.2" evidence="1"/>
<dbReference type="EMBL" id="CP000378">
    <property type="protein sequence ID" value="ABF77845.1"/>
    <property type="molecule type" value="Genomic_DNA"/>
</dbReference>
<dbReference type="SMR" id="Q1BRB0"/>
<dbReference type="HOGENOM" id="CLU_022398_0_2_4"/>
<dbReference type="GO" id="GO:0005886">
    <property type="term" value="C:plasma membrane"/>
    <property type="evidence" value="ECO:0007669"/>
    <property type="project" value="UniProtKB-SubCell"/>
</dbReference>
<dbReference type="GO" id="GO:0045259">
    <property type="term" value="C:proton-transporting ATP synthase complex"/>
    <property type="evidence" value="ECO:0007669"/>
    <property type="project" value="UniProtKB-KW"/>
</dbReference>
<dbReference type="GO" id="GO:0005524">
    <property type="term" value="F:ATP binding"/>
    <property type="evidence" value="ECO:0007669"/>
    <property type="project" value="UniProtKB-UniRule"/>
</dbReference>
<dbReference type="GO" id="GO:0016887">
    <property type="term" value="F:ATP hydrolysis activity"/>
    <property type="evidence" value="ECO:0007669"/>
    <property type="project" value="InterPro"/>
</dbReference>
<dbReference type="GO" id="GO:0046933">
    <property type="term" value="F:proton-transporting ATP synthase activity, rotational mechanism"/>
    <property type="evidence" value="ECO:0007669"/>
    <property type="project" value="UniProtKB-UniRule"/>
</dbReference>
<dbReference type="CDD" id="cd18110">
    <property type="entry name" value="ATP-synt_F1_beta_C"/>
    <property type="match status" value="1"/>
</dbReference>
<dbReference type="CDD" id="cd18115">
    <property type="entry name" value="ATP-synt_F1_beta_N"/>
    <property type="match status" value="1"/>
</dbReference>
<dbReference type="CDD" id="cd01133">
    <property type="entry name" value="F1-ATPase_beta_CD"/>
    <property type="match status" value="1"/>
</dbReference>
<dbReference type="FunFam" id="1.10.1140.10:FF:000001">
    <property type="entry name" value="ATP synthase subunit beta"/>
    <property type="match status" value="1"/>
</dbReference>
<dbReference type="FunFam" id="3.40.50.300:FF:000004">
    <property type="entry name" value="ATP synthase subunit beta"/>
    <property type="match status" value="1"/>
</dbReference>
<dbReference type="Gene3D" id="2.40.10.170">
    <property type="match status" value="1"/>
</dbReference>
<dbReference type="Gene3D" id="1.10.1140.10">
    <property type="entry name" value="Bovine Mitochondrial F1-atpase, Atp Synthase Beta Chain, Chain D, domain 3"/>
    <property type="match status" value="1"/>
</dbReference>
<dbReference type="Gene3D" id="3.40.50.300">
    <property type="entry name" value="P-loop containing nucleotide triphosphate hydrolases"/>
    <property type="match status" value="1"/>
</dbReference>
<dbReference type="HAMAP" id="MF_01347">
    <property type="entry name" value="ATP_synth_beta_bact"/>
    <property type="match status" value="1"/>
</dbReference>
<dbReference type="InterPro" id="IPR003593">
    <property type="entry name" value="AAA+_ATPase"/>
</dbReference>
<dbReference type="InterPro" id="IPR055190">
    <property type="entry name" value="ATP-synt_VA_C"/>
</dbReference>
<dbReference type="InterPro" id="IPR005722">
    <property type="entry name" value="ATP_synth_F1_bsu"/>
</dbReference>
<dbReference type="InterPro" id="IPR020003">
    <property type="entry name" value="ATPase_a/bsu_AS"/>
</dbReference>
<dbReference type="InterPro" id="IPR050053">
    <property type="entry name" value="ATPase_alpha/beta_chains"/>
</dbReference>
<dbReference type="InterPro" id="IPR004100">
    <property type="entry name" value="ATPase_F1/V1/A1_a/bsu_N"/>
</dbReference>
<dbReference type="InterPro" id="IPR036121">
    <property type="entry name" value="ATPase_F1/V1/A1_a/bsu_N_sf"/>
</dbReference>
<dbReference type="InterPro" id="IPR000194">
    <property type="entry name" value="ATPase_F1/V1/A1_a/bsu_nucl-bd"/>
</dbReference>
<dbReference type="InterPro" id="IPR024034">
    <property type="entry name" value="ATPase_F1/V1_b/a_C"/>
</dbReference>
<dbReference type="InterPro" id="IPR027417">
    <property type="entry name" value="P-loop_NTPase"/>
</dbReference>
<dbReference type="NCBIfam" id="TIGR01039">
    <property type="entry name" value="atpD"/>
    <property type="match status" value="1"/>
</dbReference>
<dbReference type="PANTHER" id="PTHR15184">
    <property type="entry name" value="ATP SYNTHASE"/>
    <property type="match status" value="1"/>
</dbReference>
<dbReference type="PANTHER" id="PTHR15184:SF71">
    <property type="entry name" value="ATP SYNTHASE SUBUNIT BETA, MITOCHONDRIAL"/>
    <property type="match status" value="1"/>
</dbReference>
<dbReference type="Pfam" id="PF00006">
    <property type="entry name" value="ATP-synt_ab"/>
    <property type="match status" value="1"/>
</dbReference>
<dbReference type="Pfam" id="PF02874">
    <property type="entry name" value="ATP-synt_ab_N"/>
    <property type="match status" value="1"/>
</dbReference>
<dbReference type="Pfam" id="PF22919">
    <property type="entry name" value="ATP-synt_VA_C"/>
    <property type="match status" value="1"/>
</dbReference>
<dbReference type="SMART" id="SM00382">
    <property type="entry name" value="AAA"/>
    <property type="match status" value="1"/>
</dbReference>
<dbReference type="SUPFAM" id="SSF47917">
    <property type="entry name" value="C-terminal domain of alpha and beta subunits of F1 ATP synthase"/>
    <property type="match status" value="1"/>
</dbReference>
<dbReference type="SUPFAM" id="SSF50615">
    <property type="entry name" value="N-terminal domain of alpha and beta subunits of F1 ATP synthase"/>
    <property type="match status" value="1"/>
</dbReference>
<dbReference type="SUPFAM" id="SSF52540">
    <property type="entry name" value="P-loop containing nucleoside triphosphate hydrolases"/>
    <property type="match status" value="1"/>
</dbReference>
<dbReference type="PROSITE" id="PS00152">
    <property type="entry name" value="ATPASE_ALPHA_BETA"/>
    <property type="match status" value="1"/>
</dbReference>
<name>ATPB_BURO1</name>
<accession>Q1BRB0</accession>
<evidence type="ECO:0000255" key="1">
    <source>
        <dbReference type="HAMAP-Rule" id="MF_01347"/>
    </source>
</evidence>